<name>GAL1_SHIF8</name>
<organism>
    <name type="scientific">Shigella flexneri serotype 5b (strain 8401)</name>
    <dbReference type="NCBI Taxonomy" id="373384"/>
    <lineage>
        <taxon>Bacteria</taxon>
        <taxon>Pseudomonadati</taxon>
        <taxon>Pseudomonadota</taxon>
        <taxon>Gammaproteobacteria</taxon>
        <taxon>Enterobacterales</taxon>
        <taxon>Enterobacteriaceae</taxon>
        <taxon>Shigella</taxon>
    </lineage>
</organism>
<sequence length="382" mass="41499">MSLKEKTQSLFANAFGYPATHTIQAPGRVNLIGEHTDYNDGFVLPCAIDYQTVISCAPRDDRKVRVMAADYENQLDEFSLNAPIVAHENYQWANYVRGVVKHLQLRNNSFGGVDMVISGNVPQGAGLSSSASLEVAVGTVLQQLYHLPLDGAQIALNGQEAENQFVGCNCGIMDQLISALGKKDHALLIDCRSLGTKAVSMPKGVAVVIINSNFKRTLVGSEYNTRREQCETGARFFQQPALRDVTIEEFNAVAHELDPIVAKRVRHILTENARTVEAASALEQGDLKRMDELMAESHASMRDDFEITVPQIDTLVEIVKAVIGDKGGVRMTGGGFGGCIVALIPEELVPAVQQAVAEQYEAKTGIKETFYVCKPSQGAGQC</sequence>
<keyword id="KW-0067">ATP-binding</keyword>
<keyword id="KW-0119">Carbohydrate metabolism</keyword>
<keyword id="KW-0963">Cytoplasm</keyword>
<keyword id="KW-0299">Galactose metabolism</keyword>
<keyword id="KW-0418">Kinase</keyword>
<keyword id="KW-0460">Magnesium</keyword>
<keyword id="KW-0479">Metal-binding</keyword>
<keyword id="KW-0547">Nucleotide-binding</keyword>
<keyword id="KW-0808">Transferase</keyword>
<proteinExistence type="inferred from homology"/>
<feature type="chain" id="PRO_1000005763" description="Galactokinase">
    <location>
        <begin position="1"/>
        <end position="382"/>
    </location>
</feature>
<feature type="active site" description="Proton acceptor" evidence="1">
    <location>
        <position position="174"/>
    </location>
</feature>
<feature type="binding site" evidence="1">
    <location>
        <begin position="34"/>
        <end position="37"/>
    </location>
    <ligand>
        <name>substrate</name>
    </ligand>
</feature>
<feature type="binding site" evidence="1">
    <location>
        <begin position="124"/>
        <end position="130"/>
    </location>
    <ligand>
        <name>ATP</name>
        <dbReference type="ChEBI" id="CHEBI:30616"/>
    </ligand>
</feature>
<feature type="binding site" evidence="1">
    <location>
        <position position="130"/>
    </location>
    <ligand>
        <name>Mg(2+)</name>
        <dbReference type="ChEBI" id="CHEBI:18420"/>
    </ligand>
</feature>
<feature type="binding site" evidence="1">
    <location>
        <position position="162"/>
    </location>
    <ligand>
        <name>Mg(2+)</name>
        <dbReference type="ChEBI" id="CHEBI:18420"/>
    </ligand>
</feature>
<feature type="binding site" evidence="1">
    <location>
        <position position="223"/>
    </location>
    <ligand>
        <name>substrate</name>
    </ligand>
</feature>
<feature type="site" description="Transition state stabilizer" evidence="1">
    <location>
        <position position="28"/>
    </location>
</feature>
<dbReference type="EC" id="2.7.1.6" evidence="1"/>
<dbReference type="EMBL" id="CP000266">
    <property type="protein sequence ID" value="ABF02839.1"/>
    <property type="molecule type" value="Genomic_DNA"/>
</dbReference>
<dbReference type="RefSeq" id="WP_000053434.1">
    <property type="nucleotide sequence ID" value="NC_008258.1"/>
</dbReference>
<dbReference type="SMR" id="Q0T6Y7"/>
<dbReference type="KEGG" id="sfv:SFV_0583"/>
<dbReference type="HOGENOM" id="CLU_017814_2_1_6"/>
<dbReference type="UniPathway" id="UPA00214"/>
<dbReference type="Proteomes" id="UP000000659">
    <property type="component" value="Chromosome"/>
</dbReference>
<dbReference type="GO" id="GO:0005829">
    <property type="term" value="C:cytosol"/>
    <property type="evidence" value="ECO:0007669"/>
    <property type="project" value="TreeGrafter"/>
</dbReference>
<dbReference type="GO" id="GO:0005524">
    <property type="term" value="F:ATP binding"/>
    <property type="evidence" value="ECO:0007669"/>
    <property type="project" value="UniProtKB-UniRule"/>
</dbReference>
<dbReference type="GO" id="GO:0004335">
    <property type="term" value="F:galactokinase activity"/>
    <property type="evidence" value="ECO:0007669"/>
    <property type="project" value="UniProtKB-UniRule"/>
</dbReference>
<dbReference type="GO" id="GO:0000287">
    <property type="term" value="F:magnesium ion binding"/>
    <property type="evidence" value="ECO:0007669"/>
    <property type="project" value="UniProtKB-UniRule"/>
</dbReference>
<dbReference type="GO" id="GO:0006012">
    <property type="term" value="P:galactose metabolic process"/>
    <property type="evidence" value="ECO:0007669"/>
    <property type="project" value="UniProtKB-UniRule"/>
</dbReference>
<dbReference type="FunFam" id="3.30.230.10:FF:000017">
    <property type="entry name" value="Galactokinase"/>
    <property type="match status" value="1"/>
</dbReference>
<dbReference type="FunFam" id="3.30.70.890:FF:000001">
    <property type="entry name" value="Galactokinase"/>
    <property type="match status" value="1"/>
</dbReference>
<dbReference type="Gene3D" id="3.30.230.10">
    <property type="match status" value="1"/>
</dbReference>
<dbReference type="Gene3D" id="3.30.70.890">
    <property type="entry name" value="GHMP kinase, C-terminal domain"/>
    <property type="match status" value="1"/>
</dbReference>
<dbReference type="HAMAP" id="MF_00246">
    <property type="entry name" value="Galactokinase"/>
    <property type="match status" value="1"/>
</dbReference>
<dbReference type="InterPro" id="IPR000705">
    <property type="entry name" value="Galactokinase"/>
</dbReference>
<dbReference type="InterPro" id="IPR022963">
    <property type="entry name" value="Galactokinase_bac"/>
</dbReference>
<dbReference type="InterPro" id="IPR019741">
    <property type="entry name" value="Galactokinase_CS"/>
</dbReference>
<dbReference type="InterPro" id="IPR019539">
    <property type="entry name" value="GalKase_N"/>
</dbReference>
<dbReference type="InterPro" id="IPR013750">
    <property type="entry name" value="GHMP_kinase_C_dom"/>
</dbReference>
<dbReference type="InterPro" id="IPR036554">
    <property type="entry name" value="GHMP_kinase_C_sf"/>
</dbReference>
<dbReference type="InterPro" id="IPR006204">
    <property type="entry name" value="GHMP_kinase_N_dom"/>
</dbReference>
<dbReference type="InterPro" id="IPR006203">
    <property type="entry name" value="GHMP_knse_ATP-bd_CS"/>
</dbReference>
<dbReference type="InterPro" id="IPR006206">
    <property type="entry name" value="Mevalonate/galactokinase"/>
</dbReference>
<dbReference type="InterPro" id="IPR020568">
    <property type="entry name" value="Ribosomal_Su5_D2-typ_SF"/>
</dbReference>
<dbReference type="InterPro" id="IPR014721">
    <property type="entry name" value="Ribsml_uS5_D2-typ_fold_subgr"/>
</dbReference>
<dbReference type="NCBIfam" id="TIGR00131">
    <property type="entry name" value="gal_kin"/>
    <property type="match status" value="1"/>
</dbReference>
<dbReference type="NCBIfam" id="NF003472">
    <property type="entry name" value="PRK05101.1"/>
    <property type="match status" value="1"/>
</dbReference>
<dbReference type="PANTHER" id="PTHR10457:SF7">
    <property type="entry name" value="GALACTOKINASE-RELATED"/>
    <property type="match status" value="1"/>
</dbReference>
<dbReference type="PANTHER" id="PTHR10457">
    <property type="entry name" value="MEVALONATE KINASE/GALACTOKINASE"/>
    <property type="match status" value="1"/>
</dbReference>
<dbReference type="Pfam" id="PF10509">
    <property type="entry name" value="GalKase_gal_bdg"/>
    <property type="match status" value="1"/>
</dbReference>
<dbReference type="Pfam" id="PF08544">
    <property type="entry name" value="GHMP_kinases_C"/>
    <property type="match status" value="1"/>
</dbReference>
<dbReference type="Pfam" id="PF00288">
    <property type="entry name" value="GHMP_kinases_N"/>
    <property type="match status" value="1"/>
</dbReference>
<dbReference type="PIRSF" id="PIRSF000530">
    <property type="entry name" value="Galactokinase"/>
    <property type="match status" value="1"/>
</dbReference>
<dbReference type="PRINTS" id="PR00473">
    <property type="entry name" value="GALCTOKINASE"/>
</dbReference>
<dbReference type="PRINTS" id="PR00959">
    <property type="entry name" value="MEVGALKINASE"/>
</dbReference>
<dbReference type="SUPFAM" id="SSF55060">
    <property type="entry name" value="GHMP Kinase, C-terminal domain"/>
    <property type="match status" value="1"/>
</dbReference>
<dbReference type="SUPFAM" id="SSF54211">
    <property type="entry name" value="Ribosomal protein S5 domain 2-like"/>
    <property type="match status" value="1"/>
</dbReference>
<dbReference type="PROSITE" id="PS00106">
    <property type="entry name" value="GALACTOKINASE"/>
    <property type="match status" value="1"/>
</dbReference>
<dbReference type="PROSITE" id="PS00627">
    <property type="entry name" value="GHMP_KINASES_ATP"/>
    <property type="match status" value="1"/>
</dbReference>
<accession>Q0T6Y7</accession>
<evidence type="ECO:0000255" key="1">
    <source>
        <dbReference type="HAMAP-Rule" id="MF_00246"/>
    </source>
</evidence>
<comment type="function">
    <text evidence="1">Catalyzes the transfer of the gamma-phosphate of ATP to D-galactose to form alpha-D-galactose-1-phosphate (Gal-1-P).</text>
</comment>
<comment type="catalytic activity">
    <reaction evidence="1">
        <text>alpha-D-galactose + ATP = alpha-D-galactose 1-phosphate + ADP + H(+)</text>
        <dbReference type="Rhea" id="RHEA:13553"/>
        <dbReference type="ChEBI" id="CHEBI:15378"/>
        <dbReference type="ChEBI" id="CHEBI:28061"/>
        <dbReference type="ChEBI" id="CHEBI:30616"/>
        <dbReference type="ChEBI" id="CHEBI:58336"/>
        <dbReference type="ChEBI" id="CHEBI:456216"/>
        <dbReference type="EC" id="2.7.1.6"/>
    </reaction>
</comment>
<comment type="pathway">
    <text evidence="1">Carbohydrate metabolism; galactose metabolism.</text>
</comment>
<comment type="subcellular location">
    <subcellularLocation>
        <location evidence="1">Cytoplasm</location>
    </subcellularLocation>
</comment>
<comment type="similarity">
    <text evidence="1">Belongs to the GHMP kinase family. GalK subfamily.</text>
</comment>
<gene>
    <name evidence="1" type="primary">galK</name>
    <name type="ordered locus">SFV_0583</name>
</gene>
<protein>
    <recommendedName>
        <fullName evidence="1">Galactokinase</fullName>
        <ecNumber evidence="1">2.7.1.6</ecNumber>
    </recommendedName>
    <alternativeName>
        <fullName evidence="1">Galactose kinase</fullName>
    </alternativeName>
</protein>
<reference key="1">
    <citation type="journal article" date="2006" name="BMC Genomics">
        <title>Complete genome sequence of Shigella flexneri 5b and comparison with Shigella flexneri 2a.</title>
        <authorList>
            <person name="Nie H."/>
            <person name="Yang F."/>
            <person name="Zhang X."/>
            <person name="Yang J."/>
            <person name="Chen L."/>
            <person name="Wang J."/>
            <person name="Xiong Z."/>
            <person name="Peng J."/>
            <person name="Sun L."/>
            <person name="Dong J."/>
            <person name="Xue Y."/>
            <person name="Xu X."/>
            <person name="Chen S."/>
            <person name="Yao Z."/>
            <person name="Shen Y."/>
            <person name="Jin Q."/>
        </authorList>
    </citation>
    <scope>NUCLEOTIDE SEQUENCE [LARGE SCALE GENOMIC DNA]</scope>
    <source>
        <strain>8401</strain>
    </source>
</reference>